<gene>
    <name type="primary">ssb</name>
</gene>
<name>SSB_THEAQ</name>
<feature type="chain" id="PRO_0000096148" description="Single-stranded DNA-binding protein">
    <location>
        <begin position="1"/>
        <end position="264"/>
    </location>
</feature>
<feature type="domain" description="SSB 1" evidence="1">
    <location>
        <begin position="5"/>
        <end position="108"/>
    </location>
</feature>
<feature type="domain" description="SSB 2" evidence="1">
    <location>
        <begin position="128"/>
        <end position="228"/>
    </location>
</feature>
<feature type="region of interest" description="Disordered" evidence="2">
    <location>
        <begin position="224"/>
        <end position="264"/>
    </location>
</feature>
<feature type="short sequence motif" description="Important for interaction with partner proteins" evidence="1">
    <location>
        <begin position="259"/>
        <end position="264"/>
    </location>
</feature>
<feature type="compositionally biased region" description="Acidic residues" evidence="2">
    <location>
        <begin position="248"/>
        <end position="264"/>
    </location>
</feature>
<feature type="strand" evidence="4">
    <location>
        <begin position="5"/>
        <end position="16"/>
    </location>
</feature>
<feature type="strand" evidence="5">
    <location>
        <begin position="19"/>
        <end position="22"/>
    </location>
</feature>
<feature type="strand" evidence="4">
    <location>
        <begin position="28"/>
        <end position="41"/>
    </location>
</feature>
<feature type="strand" evidence="4">
    <location>
        <begin position="47"/>
        <end position="59"/>
    </location>
</feature>
<feature type="helix" evidence="4">
    <location>
        <begin position="61"/>
        <end position="66"/>
    </location>
</feature>
<feature type="turn" evidence="4">
    <location>
        <begin position="67"/>
        <end position="69"/>
    </location>
</feature>
<feature type="strand" evidence="4">
    <location>
        <begin position="75"/>
        <end position="84"/>
    </location>
</feature>
<feature type="strand" evidence="4">
    <location>
        <begin position="97"/>
        <end position="106"/>
    </location>
</feature>
<feature type="strand" evidence="4">
    <location>
        <begin position="129"/>
        <end position="139"/>
    </location>
</feature>
<feature type="strand" evidence="5">
    <location>
        <begin position="142"/>
        <end position="145"/>
    </location>
</feature>
<feature type="strand" evidence="4">
    <location>
        <begin position="151"/>
        <end position="160"/>
    </location>
</feature>
<feature type="strand" evidence="4">
    <location>
        <begin position="171"/>
        <end position="179"/>
    </location>
</feature>
<feature type="helix" evidence="4">
    <location>
        <begin position="180"/>
        <end position="186"/>
    </location>
</feature>
<feature type="strand" evidence="4">
    <location>
        <begin position="194"/>
        <end position="207"/>
    </location>
</feature>
<feature type="strand" evidence="4">
    <location>
        <begin position="213"/>
        <end position="225"/>
    </location>
</feature>
<evidence type="ECO:0000255" key="1">
    <source>
        <dbReference type="HAMAP-Rule" id="MF_00984"/>
    </source>
</evidence>
<evidence type="ECO:0000256" key="2">
    <source>
        <dbReference type="SAM" id="MobiDB-lite"/>
    </source>
</evidence>
<evidence type="ECO:0000269" key="3">
    <source>
    </source>
</evidence>
<evidence type="ECO:0007829" key="4">
    <source>
        <dbReference type="PDB" id="2FXQ"/>
    </source>
</evidence>
<evidence type="ECO:0007829" key="5">
    <source>
        <dbReference type="PDB" id="2IHF"/>
    </source>
</evidence>
<sequence length="264" mass="30029">MARGLNQVFLIGTLTARPDMRYTPGGLAILDLNLAGQDAFTDESGQEREVPWYHRVRLLGRQAEMWGDLLEKGQLIFVEGRLEYRQWEKDGEKKSEVQVRAEFIDPLEGRGRETLEDARGQPRLRRALNQVILMGNLTRDPDLRYTPQGTAVVRLGLAVNERRRGQEEERTHFLEVQAWRELAEWASELRKGDGLLVIGRLVNDSWTSSSGERRFQTRVEALRLERPTRGPAQAGGSRPPTVQTGGVDIDEGLEDFPPEEDLPF</sequence>
<keyword id="KW-0002">3D-structure</keyword>
<keyword id="KW-0227">DNA damage</keyword>
<keyword id="KW-0233">DNA recombination</keyword>
<keyword id="KW-0234">DNA repair</keyword>
<keyword id="KW-0235">DNA replication</keyword>
<keyword id="KW-0238">DNA-binding</keyword>
<keyword id="KW-0677">Repeat</keyword>
<proteinExistence type="evidence at protein level"/>
<comment type="function">
    <text evidence="1">Plays an important role in DNA replication, recombination and repair. Binds to ssDNA and to an array of partner proteins to recruit them to their sites of action during DNA metabolism.</text>
</comment>
<comment type="subunit">
    <text evidence="3">Homodimer.</text>
</comment>
<organism>
    <name type="scientific">Thermus aquaticus</name>
    <dbReference type="NCBI Taxonomy" id="271"/>
    <lineage>
        <taxon>Bacteria</taxon>
        <taxon>Thermotogati</taxon>
        <taxon>Deinococcota</taxon>
        <taxon>Deinococci</taxon>
        <taxon>Thermales</taxon>
        <taxon>Thermaceae</taxon>
        <taxon>Thermus</taxon>
    </lineage>
</organism>
<accession>Q9KH06</accession>
<reference key="1">
    <citation type="journal article" date="2002" name="Microbiology">
        <title>Identification and characterization of single-stranded-DNA-binding proteins from Thermus thermophilus and Thermus aquaticus -- new arrangement of binding domains.</title>
        <authorList>
            <person name="Dabrowski S."/>
            <person name="Olszewski M."/>
            <person name="Piatek R."/>
            <person name="Brillowska-Dabrowska A."/>
            <person name="Konopa G."/>
            <person name="Kur J."/>
        </authorList>
    </citation>
    <scope>NUCLEOTIDE SEQUENCE [GENOMIC DNA]</scope>
    <scope>SUBUNIT</scope>
    <source>
        <strain>ATCC 25104 / DSM 625 / JCM 10724 / NBRC 103206 / NCIMB 11243 / YT-1</strain>
    </source>
</reference>
<protein>
    <recommendedName>
        <fullName evidence="1">Single-stranded DNA-binding protein</fullName>
        <shortName evidence="1">SSB</shortName>
    </recommendedName>
</protein>
<dbReference type="EMBL" id="AF276705">
    <property type="protein sequence ID" value="AAF85976.1"/>
    <property type="molecule type" value="Genomic_DNA"/>
</dbReference>
<dbReference type="RefSeq" id="WP_053767427.1">
    <property type="nucleotide sequence ID" value="NZ_LHCI01000106.1"/>
</dbReference>
<dbReference type="PDB" id="2FXQ">
    <property type="method" value="X-ray"/>
    <property type="resolution" value="1.85 A"/>
    <property type="chains" value="A=1-264"/>
</dbReference>
<dbReference type="PDB" id="2IHE">
    <property type="method" value="X-ray"/>
    <property type="resolution" value="2.10 A"/>
    <property type="chains" value="A=1-264"/>
</dbReference>
<dbReference type="PDB" id="2IHF">
    <property type="method" value="X-ray"/>
    <property type="resolution" value="1.90 A"/>
    <property type="chains" value="A=1-264"/>
</dbReference>
<dbReference type="PDBsum" id="2FXQ"/>
<dbReference type="PDBsum" id="2IHE"/>
<dbReference type="PDBsum" id="2IHF"/>
<dbReference type="SMR" id="Q9KH06"/>
<dbReference type="EvolutionaryTrace" id="Q9KH06"/>
<dbReference type="GO" id="GO:0009295">
    <property type="term" value="C:nucleoid"/>
    <property type="evidence" value="ECO:0007669"/>
    <property type="project" value="TreeGrafter"/>
</dbReference>
<dbReference type="GO" id="GO:0003697">
    <property type="term" value="F:single-stranded DNA binding"/>
    <property type="evidence" value="ECO:0007669"/>
    <property type="project" value="UniProtKB-UniRule"/>
</dbReference>
<dbReference type="GO" id="GO:0006310">
    <property type="term" value="P:DNA recombination"/>
    <property type="evidence" value="ECO:0007669"/>
    <property type="project" value="UniProtKB-UniRule"/>
</dbReference>
<dbReference type="GO" id="GO:0006281">
    <property type="term" value="P:DNA repair"/>
    <property type="evidence" value="ECO:0007669"/>
    <property type="project" value="UniProtKB-UniRule"/>
</dbReference>
<dbReference type="GO" id="GO:0006260">
    <property type="term" value="P:DNA replication"/>
    <property type="evidence" value="ECO:0007669"/>
    <property type="project" value="UniProtKB-UniRule"/>
</dbReference>
<dbReference type="CDD" id="cd04496">
    <property type="entry name" value="SSB_OBF"/>
    <property type="match status" value="2"/>
</dbReference>
<dbReference type="Gene3D" id="2.40.50.140">
    <property type="entry name" value="Nucleic acid-binding proteins"/>
    <property type="match status" value="2"/>
</dbReference>
<dbReference type="HAMAP" id="MF_00984">
    <property type="entry name" value="SSB"/>
    <property type="match status" value="2"/>
</dbReference>
<dbReference type="InterPro" id="IPR012340">
    <property type="entry name" value="NA-bd_OB-fold"/>
</dbReference>
<dbReference type="InterPro" id="IPR000424">
    <property type="entry name" value="Primosome_PriB/ssb"/>
</dbReference>
<dbReference type="InterPro" id="IPR011344">
    <property type="entry name" value="ssDNA-bd"/>
</dbReference>
<dbReference type="NCBIfam" id="TIGR00621">
    <property type="entry name" value="ssb"/>
    <property type="match status" value="2"/>
</dbReference>
<dbReference type="PANTHER" id="PTHR10302">
    <property type="entry name" value="SINGLE-STRANDED DNA-BINDING PROTEIN"/>
    <property type="match status" value="1"/>
</dbReference>
<dbReference type="PANTHER" id="PTHR10302:SF27">
    <property type="entry name" value="SINGLE-STRANDED DNA-BINDING PROTEIN"/>
    <property type="match status" value="1"/>
</dbReference>
<dbReference type="Pfam" id="PF00436">
    <property type="entry name" value="SSB"/>
    <property type="match status" value="2"/>
</dbReference>
<dbReference type="SUPFAM" id="SSF50249">
    <property type="entry name" value="Nucleic acid-binding proteins"/>
    <property type="match status" value="2"/>
</dbReference>
<dbReference type="PROSITE" id="PS50935">
    <property type="entry name" value="SSB"/>
    <property type="match status" value="2"/>
</dbReference>